<feature type="chain" id="PRO_0000284570" description="DNA-binding protein Tpen_0471">
    <location>
        <begin position="1"/>
        <end position="116"/>
    </location>
</feature>
<reference key="1">
    <citation type="journal article" date="2008" name="J. Bacteriol.">
        <title>Genome sequence of Thermofilum pendens reveals an exceptional loss of biosynthetic pathways without genome reduction.</title>
        <authorList>
            <person name="Anderson I."/>
            <person name="Rodriguez J."/>
            <person name="Susanti D."/>
            <person name="Porat I."/>
            <person name="Reich C."/>
            <person name="Ulrich L.E."/>
            <person name="Elkins J.G."/>
            <person name="Mavromatis K."/>
            <person name="Lykidis A."/>
            <person name="Kim E."/>
            <person name="Thompson L.S."/>
            <person name="Nolan M."/>
            <person name="Land M."/>
            <person name="Copeland A."/>
            <person name="Lapidus A."/>
            <person name="Lucas S."/>
            <person name="Detter C."/>
            <person name="Zhulin I.B."/>
            <person name="Olsen G.J."/>
            <person name="Whitman W."/>
            <person name="Mukhopadhyay B."/>
            <person name="Bristow J."/>
            <person name="Kyrpides N."/>
        </authorList>
    </citation>
    <scope>NUCLEOTIDE SEQUENCE [LARGE SCALE GENOMIC DNA]</scope>
    <source>
        <strain>DSM 2475 / Hrk 5</strain>
    </source>
</reference>
<protein>
    <recommendedName>
        <fullName evidence="1">DNA-binding protein Tpen_0471</fullName>
    </recommendedName>
</protein>
<evidence type="ECO:0000255" key="1">
    <source>
        <dbReference type="HAMAP-Rule" id="MF_00026"/>
    </source>
</evidence>
<keyword id="KW-0238">DNA-binding</keyword>
<keyword id="KW-1185">Reference proteome</keyword>
<sequence length="116" mass="13722">MSYDEGGEELEEIKRRKLLEYQRALEAEKAKEEQKAREEAMRQEILRRILTPEARARLSNLKLVKPELVEALEIQLIQLAESRSVRVPIDDETLKQILARLYEAQRAREVKFRVSF</sequence>
<accession>A1RXF0</accession>
<comment type="similarity">
    <text evidence="1">Belongs to the PDCD5 family.</text>
</comment>
<name>Y471_THEPD</name>
<proteinExistence type="inferred from homology"/>
<gene>
    <name type="ordered locus">Tpen_0471</name>
</gene>
<dbReference type="EMBL" id="CP000505">
    <property type="protein sequence ID" value="ABL77880.1"/>
    <property type="molecule type" value="Genomic_DNA"/>
</dbReference>
<dbReference type="SMR" id="A1RXF0"/>
<dbReference type="STRING" id="368408.Tpen_0471"/>
<dbReference type="EnsemblBacteria" id="ABL77880">
    <property type="protein sequence ID" value="ABL77880"/>
    <property type="gene ID" value="Tpen_0471"/>
</dbReference>
<dbReference type="KEGG" id="tpe:Tpen_0471"/>
<dbReference type="eggNOG" id="arCOG04179">
    <property type="taxonomic scope" value="Archaea"/>
</dbReference>
<dbReference type="HOGENOM" id="CLU_122978_3_0_2"/>
<dbReference type="OrthoDB" id="7912at2157"/>
<dbReference type="Proteomes" id="UP000000641">
    <property type="component" value="Chromosome"/>
</dbReference>
<dbReference type="GO" id="GO:0005829">
    <property type="term" value="C:cytosol"/>
    <property type="evidence" value="ECO:0007669"/>
    <property type="project" value="TreeGrafter"/>
</dbReference>
<dbReference type="GO" id="GO:0003677">
    <property type="term" value="F:DNA binding"/>
    <property type="evidence" value="ECO:0007669"/>
    <property type="project" value="UniProtKB-UniRule"/>
</dbReference>
<dbReference type="Gene3D" id="1.10.8.140">
    <property type="entry name" value="PDCD5-like"/>
    <property type="match status" value="1"/>
</dbReference>
<dbReference type="HAMAP" id="MF_00026">
    <property type="entry name" value="dsDNA_bind"/>
    <property type="match status" value="1"/>
</dbReference>
<dbReference type="InterPro" id="IPR022889">
    <property type="entry name" value="DNA_bind_arc"/>
</dbReference>
<dbReference type="InterPro" id="IPR002836">
    <property type="entry name" value="PDCD5-like"/>
</dbReference>
<dbReference type="InterPro" id="IPR036883">
    <property type="entry name" value="PDCD5-like_sf"/>
</dbReference>
<dbReference type="NCBIfam" id="NF003268">
    <property type="entry name" value="PRK04239.1"/>
    <property type="match status" value="1"/>
</dbReference>
<dbReference type="PANTHER" id="PTHR10840">
    <property type="entry name" value="PROGRAMMED CELL DEATH PROTEIN 5"/>
    <property type="match status" value="1"/>
</dbReference>
<dbReference type="PANTHER" id="PTHR10840:SF0">
    <property type="entry name" value="PROGRAMMED CELL DEATH PROTEIN 5"/>
    <property type="match status" value="1"/>
</dbReference>
<dbReference type="Pfam" id="PF01984">
    <property type="entry name" value="dsDNA_bind"/>
    <property type="match status" value="1"/>
</dbReference>
<dbReference type="PIRSF" id="PIRSF015730">
    <property type="entry name" value="TFAR19"/>
    <property type="match status" value="1"/>
</dbReference>
<dbReference type="SUPFAM" id="SSF46950">
    <property type="entry name" value="Double-stranded DNA-binding domain"/>
    <property type="match status" value="1"/>
</dbReference>
<organism>
    <name type="scientific">Thermofilum pendens (strain DSM 2475 / Hrk 5)</name>
    <dbReference type="NCBI Taxonomy" id="368408"/>
    <lineage>
        <taxon>Archaea</taxon>
        <taxon>Thermoproteota</taxon>
        <taxon>Thermoprotei</taxon>
        <taxon>Thermofilales</taxon>
        <taxon>Thermofilaceae</taxon>
        <taxon>Thermofilum</taxon>
    </lineage>
</organism>